<feature type="chain" id="PRO_1000129850" description="GMP reductase">
    <location>
        <begin position="1"/>
        <end position="347"/>
    </location>
</feature>
<feature type="active site" description="Thioimidate intermediate" evidence="1">
    <location>
        <position position="186"/>
    </location>
</feature>
<feature type="binding site" evidence="1">
    <location>
        <begin position="108"/>
        <end position="131"/>
    </location>
    <ligand>
        <name>NADP(+)</name>
        <dbReference type="ChEBI" id="CHEBI:58349"/>
    </ligand>
</feature>
<feature type="binding site" evidence="1">
    <location>
        <position position="181"/>
    </location>
    <ligand>
        <name>K(+)</name>
        <dbReference type="ChEBI" id="CHEBI:29103"/>
    </ligand>
</feature>
<feature type="binding site" evidence="1">
    <location>
        <position position="183"/>
    </location>
    <ligand>
        <name>K(+)</name>
        <dbReference type="ChEBI" id="CHEBI:29103"/>
    </ligand>
</feature>
<feature type="binding site" evidence="1">
    <location>
        <begin position="216"/>
        <end position="239"/>
    </location>
    <ligand>
        <name>NADP(+)</name>
        <dbReference type="ChEBI" id="CHEBI:58349"/>
    </ligand>
</feature>
<reference key="1">
    <citation type="journal article" date="2009" name="PLoS Genet.">
        <title>Organised genome dynamics in the Escherichia coli species results in highly diverse adaptive paths.</title>
        <authorList>
            <person name="Touchon M."/>
            <person name="Hoede C."/>
            <person name="Tenaillon O."/>
            <person name="Barbe V."/>
            <person name="Baeriswyl S."/>
            <person name="Bidet P."/>
            <person name="Bingen E."/>
            <person name="Bonacorsi S."/>
            <person name="Bouchier C."/>
            <person name="Bouvet O."/>
            <person name="Calteau A."/>
            <person name="Chiapello H."/>
            <person name="Clermont O."/>
            <person name="Cruveiller S."/>
            <person name="Danchin A."/>
            <person name="Diard M."/>
            <person name="Dossat C."/>
            <person name="Karoui M.E."/>
            <person name="Frapy E."/>
            <person name="Garry L."/>
            <person name="Ghigo J.M."/>
            <person name="Gilles A.M."/>
            <person name="Johnson J."/>
            <person name="Le Bouguenec C."/>
            <person name="Lescat M."/>
            <person name="Mangenot S."/>
            <person name="Martinez-Jehanne V."/>
            <person name="Matic I."/>
            <person name="Nassif X."/>
            <person name="Oztas S."/>
            <person name="Petit M.A."/>
            <person name="Pichon C."/>
            <person name="Rouy Z."/>
            <person name="Ruf C.S."/>
            <person name="Schneider D."/>
            <person name="Tourret J."/>
            <person name="Vacherie B."/>
            <person name="Vallenet D."/>
            <person name="Medigue C."/>
            <person name="Rocha E.P.C."/>
            <person name="Denamur E."/>
        </authorList>
    </citation>
    <scope>NUCLEOTIDE SEQUENCE [LARGE SCALE GENOMIC DNA]</scope>
    <source>
        <strain>S88 / ExPEC</strain>
    </source>
</reference>
<evidence type="ECO:0000255" key="1">
    <source>
        <dbReference type="HAMAP-Rule" id="MF_00596"/>
    </source>
</evidence>
<name>GUAC_ECO45</name>
<protein>
    <recommendedName>
        <fullName evidence="1">GMP reductase</fullName>
        <ecNumber evidence="1">1.7.1.7</ecNumber>
    </recommendedName>
    <alternativeName>
        <fullName evidence="1">Guanosine 5'-monophosphate oxidoreductase</fullName>
        <shortName evidence="1">Guanosine monophosphate reductase</shortName>
    </alternativeName>
</protein>
<proteinExistence type="inferred from homology"/>
<sequence length="347" mass="37384">MRIEEDLKLGFKDVLIRPKRSTLKSRSDVELERQFTFKHSGQSWSGVPIIAANMDTVGTFSMASALASFDILTAVHKHYSVEEWQAFINNSSADVLKHVMVSTGTSDADFEKTKQILDLNPALNFVCIDVANGYSEHFVQFVAKAREAWPTKTICAGNVVTGEMCEELILSGADIVKVGIGPGSVCTTRVKTGVGYPQLSAVIECADAAHGLGGMIVSDGGCTTPGDVAKAFGGGADFVMLGGMLAGHEESGGRIVEENGEKFMLFYGMSSESAMKRHVGGVAEYRAAEGKTVKLPLRGPVENTARDILGGLRSACTYVGASRLKELTKRTTFIRVQEQENRIFNNL</sequence>
<accession>B7MAM6</accession>
<gene>
    <name evidence="1" type="primary">guaC</name>
    <name type="ordered locus">ECS88_0107</name>
</gene>
<keyword id="KW-0479">Metal-binding</keyword>
<keyword id="KW-0521">NADP</keyword>
<keyword id="KW-0560">Oxidoreductase</keyword>
<keyword id="KW-0630">Potassium</keyword>
<keyword id="KW-1185">Reference proteome</keyword>
<dbReference type="EC" id="1.7.1.7" evidence="1"/>
<dbReference type="EMBL" id="CU928161">
    <property type="protein sequence ID" value="CAR01472.1"/>
    <property type="molecule type" value="Genomic_DNA"/>
</dbReference>
<dbReference type="RefSeq" id="WP_001217338.1">
    <property type="nucleotide sequence ID" value="NC_011742.1"/>
</dbReference>
<dbReference type="SMR" id="B7MAM6"/>
<dbReference type="GeneID" id="93777331"/>
<dbReference type="KEGG" id="ecz:ECS88_0107"/>
<dbReference type="HOGENOM" id="CLU_022552_5_3_6"/>
<dbReference type="Proteomes" id="UP000000747">
    <property type="component" value="Chromosome"/>
</dbReference>
<dbReference type="GO" id="GO:0005829">
    <property type="term" value="C:cytosol"/>
    <property type="evidence" value="ECO:0007669"/>
    <property type="project" value="TreeGrafter"/>
</dbReference>
<dbReference type="GO" id="GO:1902560">
    <property type="term" value="C:GMP reductase complex"/>
    <property type="evidence" value="ECO:0007669"/>
    <property type="project" value="InterPro"/>
</dbReference>
<dbReference type="GO" id="GO:0003920">
    <property type="term" value="F:GMP reductase activity"/>
    <property type="evidence" value="ECO:0007669"/>
    <property type="project" value="UniProtKB-UniRule"/>
</dbReference>
<dbReference type="GO" id="GO:0046872">
    <property type="term" value="F:metal ion binding"/>
    <property type="evidence" value="ECO:0007669"/>
    <property type="project" value="UniProtKB-KW"/>
</dbReference>
<dbReference type="GO" id="GO:0006163">
    <property type="term" value="P:purine nucleotide metabolic process"/>
    <property type="evidence" value="ECO:0007669"/>
    <property type="project" value="UniProtKB-UniRule"/>
</dbReference>
<dbReference type="CDD" id="cd00381">
    <property type="entry name" value="IMPDH"/>
    <property type="match status" value="1"/>
</dbReference>
<dbReference type="FunFam" id="3.20.20.70:FF:000012">
    <property type="entry name" value="GMP reductase"/>
    <property type="match status" value="1"/>
</dbReference>
<dbReference type="Gene3D" id="3.20.20.70">
    <property type="entry name" value="Aldolase class I"/>
    <property type="match status" value="1"/>
</dbReference>
<dbReference type="HAMAP" id="MF_00596">
    <property type="entry name" value="GMP_reduct_type1"/>
    <property type="match status" value="1"/>
</dbReference>
<dbReference type="InterPro" id="IPR013785">
    <property type="entry name" value="Aldolase_TIM"/>
</dbReference>
<dbReference type="InterPro" id="IPR050139">
    <property type="entry name" value="GMP_reductase"/>
</dbReference>
<dbReference type="InterPro" id="IPR005993">
    <property type="entry name" value="GMPR"/>
</dbReference>
<dbReference type="InterPro" id="IPR015875">
    <property type="entry name" value="IMP_DH/GMP_Rdtase_CS"/>
</dbReference>
<dbReference type="InterPro" id="IPR001093">
    <property type="entry name" value="IMP_DH_GMPRt"/>
</dbReference>
<dbReference type="NCBIfam" id="TIGR01305">
    <property type="entry name" value="GMP_reduct_1"/>
    <property type="match status" value="1"/>
</dbReference>
<dbReference type="NCBIfam" id="NF003470">
    <property type="entry name" value="PRK05096.1"/>
    <property type="match status" value="1"/>
</dbReference>
<dbReference type="PANTHER" id="PTHR43170">
    <property type="entry name" value="GMP REDUCTASE"/>
    <property type="match status" value="1"/>
</dbReference>
<dbReference type="PANTHER" id="PTHR43170:SF5">
    <property type="entry name" value="GMP REDUCTASE"/>
    <property type="match status" value="1"/>
</dbReference>
<dbReference type="Pfam" id="PF00478">
    <property type="entry name" value="IMPDH"/>
    <property type="match status" value="1"/>
</dbReference>
<dbReference type="PIRSF" id="PIRSF000235">
    <property type="entry name" value="GMP_reductase"/>
    <property type="match status" value="1"/>
</dbReference>
<dbReference type="SMART" id="SM01240">
    <property type="entry name" value="IMPDH"/>
    <property type="match status" value="1"/>
</dbReference>
<dbReference type="SUPFAM" id="SSF51412">
    <property type="entry name" value="Inosine monophosphate dehydrogenase (IMPDH)"/>
    <property type="match status" value="1"/>
</dbReference>
<dbReference type="PROSITE" id="PS00487">
    <property type="entry name" value="IMP_DH_GMP_RED"/>
    <property type="match status" value="1"/>
</dbReference>
<organism>
    <name type="scientific">Escherichia coli O45:K1 (strain S88 / ExPEC)</name>
    <dbReference type="NCBI Taxonomy" id="585035"/>
    <lineage>
        <taxon>Bacteria</taxon>
        <taxon>Pseudomonadati</taxon>
        <taxon>Pseudomonadota</taxon>
        <taxon>Gammaproteobacteria</taxon>
        <taxon>Enterobacterales</taxon>
        <taxon>Enterobacteriaceae</taxon>
        <taxon>Escherichia</taxon>
    </lineage>
</organism>
<comment type="function">
    <text evidence="1">Catalyzes the irreversible NADPH-dependent deamination of GMP to IMP. It functions in the conversion of nucleobase, nucleoside and nucleotide derivatives of G to A nucleotides, and in maintaining the intracellular balance of A and G nucleotides.</text>
</comment>
<comment type="catalytic activity">
    <reaction evidence="1">
        <text>IMP + NH4(+) + NADP(+) = GMP + NADPH + 2 H(+)</text>
        <dbReference type="Rhea" id="RHEA:17185"/>
        <dbReference type="ChEBI" id="CHEBI:15378"/>
        <dbReference type="ChEBI" id="CHEBI:28938"/>
        <dbReference type="ChEBI" id="CHEBI:57783"/>
        <dbReference type="ChEBI" id="CHEBI:58053"/>
        <dbReference type="ChEBI" id="CHEBI:58115"/>
        <dbReference type="ChEBI" id="CHEBI:58349"/>
        <dbReference type="EC" id="1.7.1.7"/>
    </reaction>
</comment>
<comment type="subunit">
    <text evidence="1">Homotetramer.</text>
</comment>
<comment type="similarity">
    <text evidence="1">Belongs to the IMPDH/GMPR family. GuaC type 1 subfamily.</text>
</comment>